<evidence type="ECO:0000255" key="1">
    <source>
        <dbReference type="HAMAP-Rule" id="MF_00019"/>
    </source>
</evidence>
<comment type="function">
    <text evidence="1">Catalyzes the reversible formation of acyl-phosphate (acyl-PO(4)) from acyl-[acyl-carrier-protein] (acyl-ACP). This enzyme utilizes acyl-ACP as fatty acyl donor, but not acyl-CoA.</text>
</comment>
<comment type="catalytic activity">
    <reaction evidence="1">
        <text>a fatty acyl-[ACP] + phosphate = an acyl phosphate + holo-[ACP]</text>
        <dbReference type="Rhea" id="RHEA:42292"/>
        <dbReference type="Rhea" id="RHEA-COMP:9685"/>
        <dbReference type="Rhea" id="RHEA-COMP:14125"/>
        <dbReference type="ChEBI" id="CHEBI:43474"/>
        <dbReference type="ChEBI" id="CHEBI:59918"/>
        <dbReference type="ChEBI" id="CHEBI:64479"/>
        <dbReference type="ChEBI" id="CHEBI:138651"/>
        <dbReference type="EC" id="2.3.1.274"/>
    </reaction>
</comment>
<comment type="pathway">
    <text evidence="1">Lipid metabolism; phospholipid metabolism.</text>
</comment>
<comment type="subunit">
    <text evidence="1">Homodimer. Probably interacts with PlsY.</text>
</comment>
<comment type="subcellular location">
    <subcellularLocation>
        <location evidence="1">Cytoplasm</location>
    </subcellularLocation>
    <text evidence="1">Associated with the membrane possibly through PlsY.</text>
</comment>
<comment type="similarity">
    <text evidence="1">Belongs to the PlsX family.</text>
</comment>
<sequence length="360" mass="37479">MSSPVTAQRPPAAPPLIAVDAMGGDHAPREIVAGAVRAVREHGLRLALVGRSSELAPLVAAEQAARELPIVHAEEALAMHEGALAAWRRARSSVAVGCKLVRQGTAAALVSAGSTGGVVSTATVRLRTLPGVLRPALALVLPTTPTPTILLDAGANADAKPEMLVQFAHLGAAYARVGHGIAEPRVGILTIGSEPGKGNKLARRAAELLSANATEDRLDFRGNIEGHDLLAGLVDVVVTDGFTGNVALKSVEGAVRFAFDEIRAALTSSPLARFGTLFQRRALRELRTRFDSETYGGAVLLGLNGTVVIAHGASRAEGIAHACLLAHNLVVGRITDQIRRGIAGVSRTPSWLHRLSAPEE</sequence>
<proteinExistence type="inferred from homology"/>
<keyword id="KW-0963">Cytoplasm</keyword>
<keyword id="KW-0444">Lipid biosynthesis</keyword>
<keyword id="KW-0443">Lipid metabolism</keyword>
<keyword id="KW-0594">Phospholipid biosynthesis</keyword>
<keyword id="KW-1208">Phospholipid metabolism</keyword>
<keyword id="KW-0808">Transferase</keyword>
<dbReference type="EC" id="2.3.1.274" evidence="1"/>
<dbReference type="EMBL" id="CP000088">
    <property type="protein sequence ID" value="AAZ54309.1"/>
    <property type="molecule type" value="Genomic_DNA"/>
</dbReference>
<dbReference type="RefSeq" id="WP_011290718.1">
    <property type="nucleotide sequence ID" value="NC_007333.1"/>
</dbReference>
<dbReference type="SMR" id="Q47TA8"/>
<dbReference type="STRING" id="269800.Tfu_0271"/>
<dbReference type="KEGG" id="tfu:Tfu_0271"/>
<dbReference type="eggNOG" id="COG0416">
    <property type="taxonomic scope" value="Bacteria"/>
</dbReference>
<dbReference type="HOGENOM" id="CLU_039379_1_1_11"/>
<dbReference type="OrthoDB" id="9806408at2"/>
<dbReference type="UniPathway" id="UPA00085"/>
<dbReference type="GO" id="GO:0005737">
    <property type="term" value="C:cytoplasm"/>
    <property type="evidence" value="ECO:0007669"/>
    <property type="project" value="UniProtKB-SubCell"/>
</dbReference>
<dbReference type="GO" id="GO:0043811">
    <property type="term" value="F:phosphate:acyl-[acyl carrier protein] acyltransferase activity"/>
    <property type="evidence" value="ECO:0007669"/>
    <property type="project" value="UniProtKB-UniRule"/>
</dbReference>
<dbReference type="GO" id="GO:0006633">
    <property type="term" value="P:fatty acid biosynthetic process"/>
    <property type="evidence" value="ECO:0007669"/>
    <property type="project" value="UniProtKB-UniRule"/>
</dbReference>
<dbReference type="GO" id="GO:0008654">
    <property type="term" value="P:phospholipid biosynthetic process"/>
    <property type="evidence" value="ECO:0007669"/>
    <property type="project" value="UniProtKB-KW"/>
</dbReference>
<dbReference type="Gene3D" id="3.40.718.10">
    <property type="entry name" value="Isopropylmalate Dehydrogenase"/>
    <property type="match status" value="1"/>
</dbReference>
<dbReference type="HAMAP" id="MF_00019">
    <property type="entry name" value="PlsX"/>
    <property type="match status" value="1"/>
</dbReference>
<dbReference type="InterPro" id="IPR003664">
    <property type="entry name" value="FA_synthesis"/>
</dbReference>
<dbReference type="InterPro" id="IPR012281">
    <property type="entry name" value="Phospholipid_synth_PlsX-like"/>
</dbReference>
<dbReference type="NCBIfam" id="TIGR00182">
    <property type="entry name" value="plsX"/>
    <property type="match status" value="1"/>
</dbReference>
<dbReference type="PANTHER" id="PTHR30100">
    <property type="entry name" value="FATTY ACID/PHOSPHOLIPID SYNTHESIS PROTEIN PLSX"/>
    <property type="match status" value="1"/>
</dbReference>
<dbReference type="PANTHER" id="PTHR30100:SF1">
    <property type="entry name" value="PHOSPHATE ACYLTRANSFERASE"/>
    <property type="match status" value="1"/>
</dbReference>
<dbReference type="Pfam" id="PF02504">
    <property type="entry name" value="FA_synthesis"/>
    <property type="match status" value="1"/>
</dbReference>
<dbReference type="PIRSF" id="PIRSF002465">
    <property type="entry name" value="Phsphlp_syn_PlsX"/>
    <property type="match status" value="1"/>
</dbReference>
<dbReference type="SUPFAM" id="SSF53659">
    <property type="entry name" value="Isocitrate/Isopropylmalate dehydrogenase-like"/>
    <property type="match status" value="1"/>
</dbReference>
<gene>
    <name evidence="1" type="primary">plsX</name>
    <name type="ordered locus">Tfu_0271</name>
</gene>
<name>PLSX_THEFY</name>
<protein>
    <recommendedName>
        <fullName evidence="1">Phosphate acyltransferase</fullName>
        <ecNumber evidence="1">2.3.1.274</ecNumber>
    </recommendedName>
    <alternativeName>
        <fullName evidence="1">Acyl-ACP phosphotransacylase</fullName>
    </alternativeName>
    <alternativeName>
        <fullName evidence="1">Acyl-[acyl-carrier-protein]--phosphate acyltransferase</fullName>
    </alternativeName>
    <alternativeName>
        <fullName evidence="1">Phosphate-acyl-ACP acyltransferase</fullName>
    </alternativeName>
</protein>
<organism>
    <name type="scientific">Thermobifida fusca (strain YX)</name>
    <dbReference type="NCBI Taxonomy" id="269800"/>
    <lineage>
        <taxon>Bacteria</taxon>
        <taxon>Bacillati</taxon>
        <taxon>Actinomycetota</taxon>
        <taxon>Actinomycetes</taxon>
        <taxon>Streptosporangiales</taxon>
        <taxon>Nocardiopsidaceae</taxon>
        <taxon>Thermobifida</taxon>
    </lineage>
</organism>
<feature type="chain" id="PRO_0000329275" description="Phosphate acyltransferase">
    <location>
        <begin position="1"/>
        <end position="360"/>
    </location>
</feature>
<reference key="1">
    <citation type="journal article" date="2007" name="J. Bacteriol.">
        <title>Genome sequence and analysis of the soil cellulolytic actinomycete Thermobifida fusca YX.</title>
        <authorList>
            <person name="Lykidis A."/>
            <person name="Mavromatis K."/>
            <person name="Ivanova N."/>
            <person name="Anderson I."/>
            <person name="Land M."/>
            <person name="DiBartolo G."/>
            <person name="Martinez M."/>
            <person name="Lapidus A."/>
            <person name="Lucas S."/>
            <person name="Copeland A."/>
            <person name="Richardson P."/>
            <person name="Wilson D.B."/>
            <person name="Kyrpides N."/>
        </authorList>
    </citation>
    <scope>NUCLEOTIDE SEQUENCE [LARGE SCALE GENOMIC DNA]</scope>
    <source>
        <strain>YX</strain>
    </source>
</reference>
<accession>Q47TA8</accession>